<reference key="1">
    <citation type="journal article" date="2005" name="Genome Biol.">
        <title>Full-length cDNAs from chicken bursal lymphocytes to facilitate gene function analysis.</title>
        <authorList>
            <person name="Caldwell R.B."/>
            <person name="Kierzek A.M."/>
            <person name="Arakawa H."/>
            <person name="Bezzubov Y."/>
            <person name="Zaim J."/>
            <person name="Fiedler P."/>
            <person name="Kutter S."/>
            <person name="Blagodatski A."/>
            <person name="Kostovska D."/>
            <person name="Koter M."/>
            <person name="Plachy J."/>
            <person name="Carninci P."/>
            <person name="Hayashizaki Y."/>
            <person name="Buerstedde J.-M."/>
        </authorList>
    </citation>
    <scope>NUCLEOTIDE SEQUENCE [LARGE SCALE MRNA]</scope>
    <source>
        <strain>CB</strain>
        <tissue>Bursa of Fabricius</tissue>
    </source>
</reference>
<organism>
    <name type="scientific">Gallus gallus</name>
    <name type="common">Chicken</name>
    <dbReference type="NCBI Taxonomy" id="9031"/>
    <lineage>
        <taxon>Eukaryota</taxon>
        <taxon>Metazoa</taxon>
        <taxon>Chordata</taxon>
        <taxon>Craniata</taxon>
        <taxon>Vertebrata</taxon>
        <taxon>Euteleostomi</taxon>
        <taxon>Archelosauria</taxon>
        <taxon>Archosauria</taxon>
        <taxon>Dinosauria</taxon>
        <taxon>Saurischia</taxon>
        <taxon>Theropoda</taxon>
        <taxon>Coelurosauria</taxon>
        <taxon>Aves</taxon>
        <taxon>Neognathae</taxon>
        <taxon>Galloanserae</taxon>
        <taxon>Galliformes</taxon>
        <taxon>Phasianidae</taxon>
        <taxon>Phasianinae</taxon>
        <taxon>Gallus</taxon>
    </lineage>
</organism>
<proteinExistence type="evidence at transcript level"/>
<protein>
    <recommendedName>
        <fullName>Hypoxia up-regulated protein 1</fullName>
    </recommendedName>
</protein>
<gene>
    <name type="primary">HYOU1</name>
    <name evidence="3" type="synonym">HSPH4</name>
    <name type="ORF">RCJMB04_5l9</name>
</gene>
<feature type="signal peptide" evidence="4">
    <location>
        <begin position="1"/>
        <end position="23"/>
    </location>
</feature>
<feature type="chain" id="PRO_0000379420" description="Hypoxia up-regulated protein 1">
    <location>
        <begin position="24"/>
        <end position="1002"/>
    </location>
</feature>
<feature type="region of interest" description="Disordered" evidence="5">
    <location>
        <begin position="576"/>
        <end position="698"/>
    </location>
</feature>
<feature type="region of interest" description="Disordered" evidence="5">
    <location>
        <begin position="918"/>
        <end position="1002"/>
    </location>
</feature>
<feature type="short sequence motif" description="Prevents secretion from ER" evidence="4">
    <location>
        <begin position="999"/>
        <end position="1002"/>
    </location>
</feature>
<feature type="compositionally biased region" description="Basic and acidic residues" evidence="5">
    <location>
        <begin position="643"/>
        <end position="675"/>
    </location>
</feature>
<feature type="compositionally biased region" description="Polar residues" evidence="5">
    <location>
        <begin position="933"/>
        <end position="947"/>
    </location>
</feature>
<feature type="compositionally biased region" description="Basic and acidic residues" evidence="5">
    <location>
        <begin position="951"/>
        <end position="962"/>
    </location>
</feature>
<feature type="compositionally biased region" description="Basic and acidic residues" evidence="5">
    <location>
        <begin position="983"/>
        <end position="1002"/>
    </location>
</feature>
<accession>Q5ZLK7</accession>
<dbReference type="EMBL" id="AJ719727">
    <property type="protein sequence ID" value="CAG31386.1"/>
    <property type="molecule type" value="mRNA"/>
</dbReference>
<dbReference type="RefSeq" id="NP_001006588.1">
    <property type="nucleotide sequence ID" value="NM_001006588.1"/>
</dbReference>
<dbReference type="SMR" id="Q5ZLK7"/>
<dbReference type="FunCoup" id="Q5ZLK7">
    <property type="interactions" value="2890"/>
</dbReference>
<dbReference type="STRING" id="9031.ENSGALP00000057710"/>
<dbReference type="GlyGen" id="Q5ZLK7">
    <property type="glycosylation" value="1 site"/>
</dbReference>
<dbReference type="PaxDb" id="9031-ENSGALP00000039757"/>
<dbReference type="KEGG" id="gga:428251"/>
<dbReference type="VEuPathDB" id="HostDB:geneid_428251"/>
<dbReference type="eggNOG" id="KOG0104">
    <property type="taxonomic scope" value="Eukaryota"/>
</dbReference>
<dbReference type="InParanoid" id="Q5ZLK7"/>
<dbReference type="OrthoDB" id="10262720at2759"/>
<dbReference type="PhylomeDB" id="Q5ZLK7"/>
<dbReference type="PRO" id="PR:Q5ZLK7"/>
<dbReference type="Proteomes" id="UP000000539">
    <property type="component" value="Unassembled WGS sequence"/>
</dbReference>
<dbReference type="GO" id="GO:0034663">
    <property type="term" value="C:endoplasmic reticulum chaperone complex"/>
    <property type="evidence" value="ECO:0000318"/>
    <property type="project" value="GO_Central"/>
</dbReference>
<dbReference type="GO" id="GO:0005788">
    <property type="term" value="C:endoplasmic reticulum lumen"/>
    <property type="evidence" value="ECO:0007669"/>
    <property type="project" value="UniProtKB-SubCell"/>
</dbReference>
<dbReference type="GO" id="GO:0000774">
    <property type="term" value="F:adenyl-nucleotide exchange factor activity"/>
    <property type="evidence" value="ECO:0000318"/>
    <property type="project" value="GO_Central"/>
</dbReference>
<dbReference type="GO" id="GO:0005524">
    <property type="term" value="F:ATP binding"/>
    <property type="evidence" value="ECO:0007669"/>
    <property type="project" value="UniProtKB-KW"/>
</dbReference>
<dbReference type="GO" id="GO:0140662">
    <property type="term" value="F:ATP-dependent protein folding chaperone"/>
    <property type="evidence" value="ECO:0007669"/>
    <property type="project" value="InterPro"/>
</dbReference>
<dbReference type="GO" id="GO:1903298">
    <property type="term" value="P:negative regulation of hypoxia-induced intrinsic apoptotic signaling pathway"/>
    <property type="evidence" value="ECO:0000318"/>
    <property type="project" value="GO_Central"/>
</dbReference>
<dbReference type="CDD" id="cd10230">
    <property type="entry name" value="ASKHA_NBD_HSP70_HYOU1"/>
    <property type="match status" value="1"/>
</dbReference>
<dbReference type="FunFam" id="1.20.1270.10:FF:000013">
    <property type="entry name" value="Hypoxia up-regulated protein 1"/>
    <property type="match status" value="1"/>
</dbReference>
<dbReference type="FunFam" id="2.60.34.10:FF:000009">
    <property type="entry name" value="Hypoxia up-regulated protein 1"/>
    <property type="match status" value="1"/>
</dbReference>
<dbReference type="FunFam" id="3.90.640.10:FF:000012">
    <property type="entry name" value="Hypoxia up-regulated protein 1"/>
    <property type="match status" value="1"/>
</dbReference>
<dbReference type="FunFam" id="3.30.30.30:FF:000004">
    <property type="entry name" value="hypoxia up-regulated protein 1"/>
    <property type="match status" value="1"/>
</dbReference>
<dbReference type="Gene3D" id="1.20.1270.10">
    <property type="match status" value="1"/>
</dbReference>
<dbReference type="Gene3D" id="3.30.30.30">
    <property type="match status" value="1"/>
</dbReference>
<dbReference type="Gene3D" id="3.30.420.40">
    <property type="match status" value="2"/>
</dbReference>
<dbReference type="Gene3D" id="3.90.640.10">
    <property type="entry name" value="Actin, Chain A, domain 4"/>
    <property type="match status" value="1"/>
</dbReference>
<dbReference type="Gene3D" id="2.60.34.10">
    <property type="entry name" value="Substrate Binding Domain Of DNAk, Chain A, domain 1"/>
    <property type="match status" value="1"/>
</dbReference>
<dbReference type="InterPro" id="IPR043129">
    <property type="entry name" value="ATPase_NBD"/>
</dbReference>
<dbReference type="InterPro" id="IPR018181">
    <property type="entry name" value="Heat_shock_70_CS"/>
</dbReference>
<dbReference type="InterPro" id="IPR029048">
    <property type="entry name" value="HSP70_C_sf"/>
</dbReference>
<dbReference type="InterPro" id="IPR029047">
    <property type="entry name" value="HSP70_peptide-bd_sf"/>
</dbReference>
<dbReference type="InterPro" id="IPR013126">
    <property type="entry name" value="Hsp_70_fam"/>
</dbReference>
<dbReference type="PANTHER" id="PTHR45639">
    <property type="entry name" value="HSC70CB, ISOFORM G-RELATED"/>
    <property type="match status" value="1"/>
</dbReference>
<dbReference type="PANTHER" id="PTHR45639:SF3">
    <property type="entry name" value="HYPOXIA UP-REGULATED PROTEIN 1"/>
    <property type="match status" value="1"/>
</dbReference>
<dbReference type="Pfam" id="PF00012">
    <property type="entry name" value="HSP70"/>
    <property type="match status" value="1"/>
</dbReference>
<dbReference type="PRINTS" id="PR00301">
    <property type="entry name" value="HEATSHOCK70"/>
</dbReference>
<dbReference type="SUPFAM" id="SSF53067">
    <property type="entry name" value="Actin-like ATPase domain"/>
    <property type="match status" value="2"/>
</dbReference>
<dbReference type="SUPFAM" id="SSF100934">
    <property type="entry name" value="Heat shock protein 70kD (HSP70), C-terminal subdomain"/>
    <property type="match status" value="1"/>
</dbReference>
<dbReference type="PROSITE" id="PS01036">
    <property type="entry name" value="HSP70_3"/>
    <property type="match status" value="1"/>
</dbReference>
<sequence length="1002" mass="112319">MARAPRWMLGWLLLACCVPHTEPLAVMSVDMGSESMKIAIVKPGVPMEIVLNKESRRKTPVAVALKENERLFGDSALGMSIKTPKVAFRYFQDLLGKQIDNPQVALYQSRFPEHELVKDEKRQTVIFKLSQTLQYSPEEMLGMVLNYSRGLAEEFAEQPIKDAVITVPAYFNQAERRAVLHAARMADLKVLQLINDNTAVALNYGVSGGKTSMPLHSFSFQNIMFYDMGAGSTVCTIVTYQTVKTKDSGTQPQLQIQGIGFDRTLGGLEMELRLRDYLAKLFNDQHPSKDVRKNPRAMAKLLKEANRLKTVLSANADHMAQIEGLLDDIDFKAKVSRQEFEDLCSDLFQRVPGPVQQALSSAEMNLDGIDQVILVGGATRVPKVQEVLLKAVGKEELGKNINADEAAAMGAVYQAAALSKAFKVKPFMVRDAAMFPIQVEFTREVEEDDKSKSLKHNKRILFQRMAPYPQRKVITFNRYTDDFEFYVNYGDLSFLNQDDLRIFGSLNLTTVRLKGVGESFKKHSDYESKGIKAHFNMDESGVLSLDRVESVFETLVEDKLEEESTLTKLGNTISSLFGGGGHTPEAGENLTDSVQEEEESLAEAAKEEQGVKQGQKSSAEDAGEEQGEEKQQSPHPDQAEAVPPKEESQKNEEGEKSEARDPKEDKETVNEEELSKSSGAGTAAKAEEEKKIKAPKKQKLVHEITMELDVNDVPDLLEDELKSSMKKLQDLTIRDLEKQEREKSANSLESFIFETQDKLYQEEYLFVSTEEEREEISKKLSEASNWMEEEGYAAATKELKDKLAELKKLCRNLFFRVEERRKWPERLAALESLLNHSNIFLKGARMIPESDQIFTEVELGTLEKAINETTVWKNETLAEQNKLSPAEKPVLLSKDIELKIAGLDREVQYLLDKAKFAKPKPKKEKNATKSDSGKNATGTSESENTIPPTEGKQEEKPEDISPAKEPPTTEKVVTDDEPGSDSSSKKEKKPEAGGESRKNDEL</sequence>
<evidence type="ECO:0000250" key="1"/>
<evidence type="ECO:0000250" key="2">
    <source>
        <dbReference type="UniProtKB" id="Q9JKR6"/>
    </source>
</evidence>
<evidence type="ECO:0000250" key="3">
    <source>
        <dbReference type="UniProtKB" id="Q9Y4L1"/>
    </source>
</evidence>
<evidence type="ECO:0000255" key="4"/>
<evidence type="ECO:0000256" key="5">
    <source>
        <dbReference type="SAM" id="MobiDB-lite"/>
    </source>
</evidence>
<evidence type="ECO:0000305" key="6"/>
<name>HYOU1_CHICK</name>
<comment type="function">
    <text evidence="1 2">Has a pivotal role in cytoprotective cellular mechanisms triggered by oxygen deprivation. Promotes HSPA5/BiP-mediated ATP nucleotide exchange and thereby activates the unfolded protein response (UPR) pathway in the presence of endoplasmic reticulum stress (By similarity). May play a role as a molecular chaperone and participate in protein folding.</text>
</comment>
<comment type="subcellular location">
    <subcellularLocation>
        <location evidence="1">Endoplasmic reticulum lumen</location>
    </subcellularLocation>
</comment>
<comment type="similarity">
    <text evidence="6">Belongs to the heat shock protein 70 family.</text>
</comment>
<keyword id="KW-0067">ATP-binding</keyword>
<keyword id="KW-0143">Chaperone</keyword>
<keyword id="KW-0256">Endoplasmic reticulum</keyword>
<keyword id="KW-0547">Nucleotide-binding</keyword>
<keyword id="KW-1185">Reference proteome</keyword>
<keyword id="KW-0732">Signal</keyword>